<reference key="1">
    <citation type="journal article" date="2000" name="Insect Biochem. Mol. Biol.">
        <title>Studies on proteins in post-ecdysial nymphal cuticle of locust, Locusta migratoria, and cockroach, Blaberus craniifer.</title>
        <authorList>
            <person name="Andersen S.O."/>
        </authorList>
    </citation>
    <scope>PROTEIN SEQUENCE</scope>
    <scope>MASS SPECTROMETRY</scope>
    <source>
        <tissue>Fifth instar larvae</tissue>
    </source>
</reference>
<name>CUO7_BLACR</name>
<dbReference type="GO" id="GO:0062129">
    <property type="term" value="C:chitin-based extracellular matrix"/>
    <property type="evidence" value="ECO:0007669"/>
    <property type="project" value="TreeGrafter"/>
</dbReference>
<dbReference type="GO" id="GO:0008010">
    <property type="term" value="F:structural constituent of chitin-based larval cuticle"/>
    <property type="evidence" value="ECO:0007669"/>
    <property type="project" value="TreeGrafter"/>
</dbReference>
<dbReference type="InterPro" id="IPR031311">
    <property type="entry name" value="CHIT_BIND_RR_consensus"/>
</dbReference>
<dbReference type="InterPro" id="IPR050468">
    <property type="entry name" value="Cuticle_Struct_Prot"/>
</dbReference>
<dbReference type="InterPro" id="IPR000618">
    <property type="entry name" value="Insect_cuticle"/>
</dbReference>
<dbReference type="PANTHER" id="PTHR10380">
    <property type="entry name" value="CUTICLE PROTEIN"/>
    <property type="match status" value="1"/>
</dbReference>
<dbReference type="PANTHER" id="PTHR10380:SF236">
    <property type="entry name" value="PUPAL CUTICLE PROTEIN EDG-84A-LIKE PROTEIN"/>
    <property type="match status" value="1"/>
</dbReference>
<dbReference type="Pfam" id="PF00379">
    <property type="entry name" value="Chitin_bind_4"/>
    <property type="match status" value="1"/>
</dbReference>
<dbReference type="PROSITE" id="PS00233">
    <property type="entry name" value="CHIT_BIND_RR_1"/>
    <property type="match status" value="1"/>
</dbReference>
<dbReference type="PROSITE" id="PS51155">
    <property type="entry name" value="CHIT_BIND_RR_2"/>
    <property type="match status" value="1"/>
</dbReference>
<protein>
    <recommendedName>
        <fullName>Cuticle protein 7</fullName>
    </recommendedName>
    <alternativeName>
        <fullName>BcNCP15.0</fullName>
    </alternativeName>
</protein>
<feature type="chain" id="PRO_0000196143" description="Cuticle protein 7">
    <location>
        <begin position="1"/>
        <end position="145"/>
    </location>
</feature>
<feature type="domain" description="Chitin-binding type R&amp;R" evidence="1">
    <location>
        <begin position="41"/>
        <end position="114"/>
    </location>
</feature>
<proteinExistence type="evidence at protein level"/>
<evidence type="ECO:0000255" key="1">
    <source>
        <dbReference type="PROSITE-ProRule" id="PRU00497"/>
    </source>
</evidence>
<evidence type="ECO:0000269" key="2">
    <source>
    </source>
</evidence>
<organism>
    <name type="scientific">Blaberus craniifer</name>
    <name type="common">Death's head cockroach</name>
    <dbReference type="NCBI Taxonomy" id="6982"/>
    <lineage>
        <taxon>Eukaryota</taxon>
        <taxon>Metazoa</taxon>
        <taxon>Ecdysozoa</taxon>
        <taxon>Arthropoda</taxon>
        <taxon>Hexapoda</taxon>
        <taxon>Insecta</taxon>
        <taxon>Pterygota</taxon>
        <taxon>Neoptera</taxon>
        <taxon>Polyneoptera</taxon>
        <taxon>Dictyoptera</taxon>
        <taxon>Blattodea</taxon>
        <taxon>Blaberoidea</taxon>
        <taxon>Blaberidae</taxon>
        <taxon>Blaberinae</taxon>
        <taxon>Blaberus</taxon>
    </lineage>
</organism>
<keyword id="KW-0193">Cuticle</keyword>
<keyword id="KW-0903">Direct protein sequencing</keyword>
<keyword id="KW-0677">Repeat</keyword>
<comment type="developmental stage">
    <text>Expressed in post-ecdysial nymphs.</text>
</comment>
<comment type="mass spectrometry"/>
<accession>P82120</accession>
<sequence>DHIVSPHGFSYTSASLSPYVYAPYTYAASPYINPASVAVAPVNVATSYHAQDVIGQASYGHVDAYQAHHAVQDAAGNKVGSYSYVSPEGKVVKTNYVADATGFHVASNALPVGPTVVPAPVVDTPEVAAAKAAHLLEVEKVKGRV</sequence>